<proteinExistence type="inferred from homology"/>
<name>PDXJ_HYDCU</name>
<dbReference type="EC" id="2.6.99.2" evidence="1"/>
<dbReference type="EMBL" id="CP000109">
    <property type="protein sequence ID" value="ABB41333.1"/>
    <property type="molecule type" value="Genomic_DNA"/>
</dbReference>
<dbReference type="SMR" id="Q31HP0"/>
<dbReference type="STRING" id="317025.Tcr_0737"/>
<dbReference type="KEGG" id="tcx:Tcr_0737"/>
<dbReference type="eggNOG" id="COG0854">
    <property type="taxonomic scope" value="Bacteria"/>
</dbReference>
<dbReference type="HOGENOM" id="CLU_074563_0_0_6"/>
<dbReference type="OrthoDB" id="9806590at2"/>
<dbReference type="UniPathway" id="UPA00244">
    <property type="reaction ID" value="UER00313"/>
</dbReference>
<dbReference type="GO" id="GO:0005829">
    <property type="term" value="C:cytosol"/>
    <property type="evidence" value="ECO:0007669"/>
    <property type="project" value="TreeGrafter"/>
</dbReference>
<dbReference type="GO" id="GO:0033856">
    <property type="term" value="F:pyridoxine 5'-phosphate synthase activity"/>
    <property type="evidence" value="ECO:0007669"/>
    <property type="project" value="UniProtKB-EC"/>
</dbReference>
<dbReference type="GO" id="GO:0008615">
    <property type="term" value="P:pyridoxine biosynthetic process"/>
    <property type="evidence" value="ECO:0007669"/>
    <property type="project" value="UniProtKB-UniRule"/>
</dbReference>
<dbReference type="CDD" id="cd00003">
    <property type="entry name" value="PNPsynthase"/>
    <property type="match status" value="1"/>
</dbReference>
<dbReference type="FunFam" id="3.20.20.70:FF:000042">
    <property type="entry name" value="Pyridoxine 5'-phosphate synthase"/>
    <property type="match status" value="1"/>
</dbReference>
<dbReference type="Gene3D" id="3.20.20.70">
    <property type="entry name" value="Aldolase class I"/>
    <property type="match status" value="1"/>
</dbReference>
<dbReference type="HAMAP" id="MF_00279">
    <property type="entry name" value="PdxJ"/>
    <property type="match status" value="1"/>
</dbReference>
<dbReference type="InterPro" id="IPR013785">
    <property type="entry name" value="Aldolase_TIM"/>
</dbReference>
<dbReference type="InterPro" id="IPR004569">
    <property type="entry name" value="PyrdxlP_synth_PdxJ"/>
</dbReference>
<dbReference type="InterPro" id="IPR036130">
    <property type="entry name" value="Pyridoxine-5'_phos_synth"/>
</dbReference>
<dbReference type="NCBIfam" id="TIGR00559">
    <property type="entry name" value="pdxJ"/>
    <property type="match status" value="1"/>
</dbReference>
<dbReference type="NCBIfam" id="NF003623">
    <property type="entry name" value="PRK05265.1-1"/>
    <property type="match status" value="1"/>
</dbReference>
<dbReference type="NCBIfam" id="NF003624">
    <property type="entry name" value="PRK05265.1-2"/>
    <property type="match status" value="1"/>
</dbReference>
<dbReference type="NCBIfam" id="NF003625">
    <property type="entry name" value="PRK05265.1-3"/>
    <property type="match status" value="1"/>
</dbReference>
<dbReference type="NCBIfam" id="NF003627">
    <property type="entry name" value="PRK05265.1-5"/>
    <property type="match status" value="1"/>
</dbReference>
<dbReference type="PANTHER" id="PTHR30456">
    <property type="entry name" value="PYRIDOXINE 5'-PHOSPHATE SYNTHASE"/>
    <property type="match status" value="1"/>
</dbReference>
<dbReference type="PANTHER" id="PTHR30456:SF0">
    <property type="entry name" value="PYRIDOXINE 5'-PHOSPHATE SYNTHASE"/>
    <property type="match status" value="1"/>
</dbReference>
<dbReference type="Pfam" id="PF03740">
    <property type="entry name" value="PdxJ"/>
    <property type="match status" value="1"/>
</dbReference>
<dbReference type="SUPFAM" id="SSF63892">
    <property type="entry name" value="Pyridoxine 5'-phosphate synthase"/>
    <property type="match status" value="1"/>
</dbReference>
<organism>
    <name type="scientific">Hydrogenovibrio crunogenus (strain DSM 25203 / XCL-2)</name>
    <name type="common">Thiomicrospira crunogena</name>
    <dbReference type="NCBI Taxonomy" id="317025"/>
    <lineage>
        <taxon>Bacteria</taxon>
        <taxon>Pseudomonadati</taxon>
        <taxon>Pseudomonadota</taxon>
        <taxon>Gammaproteobacteria</taxon>
        <taxon>Thiotrichales</taxon>
        <taxon>Piscirickettsiaceae</taxon>
        <taxon>Hydrogenovibrio</taxon>
    </lineage>
</organism>
<accession>Q31HP0</accession>
<sequence>MNPIFLGLNIDHVATLRQARGTRYPDPVKAALDAEMAGADSITLHLREDRRHIQDADVYRLSELRQTKINLEMAATQEMLEIALKCQPEDVCLVPEKREELTTEGGLDVASQKAWLTDYCAQLAENKTRVSLFIDADDAQIHAAKEVGAPVIEIHTGTYAELTDPAAIKTELERIRKATDLAVSLGLTVNAGHGLHYHNVQAIAAIKEIEELNIGHAIIAQAIFSGLPDAVSEMKRLMVDARQQAYLG</sequence>
<comment type="function">
    <text evidence="1">Catalyzes the complicated ring closure reaction between the two acyclic compounds 1-deoxy-D-xylulose-5-phosphate (DXP) and 3-amino-2-oxopropyl phosphate (1-amino-acetone-3-phosphate or AAP) to form pyridoxine 5'-phosphate (PNP) and inorganic phosphate.</text>
</comment>
<comment type="catalytic activity">
    <reaction evidence="1">
        <text>3-amino-2-oxopropyl phosphate + 1-deoxy-D-xylulose 5-phosphate = pyridoxine 5'-phosphate + phosphate + 2 H2O + H(+)</text>
        <dbReference type="Rhea" id="RHEA:15265"/>
        <dbReference type="ChEBI" id="CHEBI:15377"/>
        <dbReference type="ChEBI" id="CHEBI:15378"/>
        <dbReference type="ChEBI" id="CHEBI:43474"/>
        <dbReference type="ChEBI" id="CHEBI:57279"/>
        <dbReference type="ChEBI" id="CHEBI:57792"/>
        <dbReference type="ChEBI" id="CHEBI:58589"/>
        <dbReference type="EC" id="2.6.99.2"/>
    </reaction>
</comment>
<comment type="pathway">
    <text evidence="1">Cofactor biosynthesis; pyridoxine 5'-phosphate biosynthesis; pyridoxine 5'-phosphate from D-erythrose 4-phosphate: step 5/5.</text>
</comment>
<comment type="subunit">
    <text evidence="1">Homooctamer; tetramer of dimers.</text>
</comment>
<comment type="subcellular location">
    <subcellularLocation>
        <location evidence="1">Cytoplasm</location>
    </subcellularLocation>
</comment>
<comment type="similarity">
    <text evidence="1">Belongs to the PNP synthase family.</text>
</comment>
<keyword id="KW-0963">Cytoplasm</keyword>
<keyword id="KW-0664">Pyridoxine biosynthesis</keyword>
<keyword id="KW-0808">Transferase</keyword>
<feature type="chain" id="PRO_0000231852" description="Pyridoxine 5'-phosphate synthase">
    <location>
        <begin position="1"/>
        <end position="248"/>
    </location>
</feature>
<feature type="active site" description="Proton acceptor" evidence="1">
    <location>
        <position position="45"/>
    </location>
</feature>
<feature type="active site" description="Proton acceptor" evidence="1">
    <location>
        <position position="72"/>
    </location>
</feature>
<feature type="active site" description="Proton donor" evidence="1">
    <location>
        <position position="193"/>
    </location>
</feature>
<feature type="binding site" evidence="1">
    <location>
        <position position="9"/>
    </location>
    <ligand>
        <name>3-amino-2-oxopropyl phosphate</name>
        <dbReference type="ChEBI" id="CHEBI:57279"/>
    </ligand>
</feature>
<feature type="binding site" evidence="1">
    <location>
        <begin position="11"/>
        <end position="12"/>
    </location>
    <ligand>
        <name>1-deoxy-D-xylulose 5-phosphate</name>
        <dbReference type="ChEBI" id="CHEBI:57792"/>
    </ligand>
</feature>
<feature type="binding site" evidence="1">
    <location>
        <position position="20"/>
    </location>
    <ligand>
        <name>3-amino-2-oxopropyl phosphate</name>
        <dbReference type="ChEBI" id="CHEBI:57279"/>
    </ligand>
</feature>
<feature type="binding site" evidence="1">
    <location>
        <position position="47"/>
    </location>
    <ligand>
        <name>1-deoxy-D-xylulose 5-phosphate</name>
        <dbReference type="ChEBI" id="CHEBI:57792"/>
    </ligand>
</feature>
<feature type="binding site" evidence="1">
    <location>
        <position position="52"/>
    </location>
    <ligand>
        <name>1-deoxy-D-xylulose 5-phosphate</name>
        <dbReference type="ChEBI" id="CHEBI:57792"/>
    </ligand>
</feature>
<feature type="binding site" evidence="1">
    <location>
        <position position="102"/>
    </location>
    <ligand>
        <name>1-deoxy-D-xylulose 5-phosphate</name>
        <dbReference type="ChEBI" id="CHEBI:57792"/>
    </ligand>
</feature>
<feature type="binding site" evidence="1">
    <location>
        <position position="194"/>
    </location>
    <ligand>
        <name>3-amino-2-oxopropyl phosphate</name>
        <dbReference type="ChEBI" id="CHEBI:57279"/>
    </ligand>
</feature>
<feature type="binding site" evidence="1">
    <location>
        <begin position="215"/>
        <end position="216"/>
    </location>
    <ligand>
        <name>3-amino-2-oxopropyl phosphate</name>
        <dbReference type="ChEBI" id="CHEBI:57279"/>
    </ligand>
</feature>
<feature type="site" description="Transition state stabilizer" evidence="1">
    <location>
        <position position="153"/>
    </location>
</feature>
<reference key="1">
    <citation type="journal article" date="2006" name="PLoS Biol.">
        <title>The genome of deep-sea vent chemolithoautotroph Thiomicrospira crunogena XCL-2.</title>
        <authorList>
            <person name="Scott K.M."/>
            <person name="Sievert S.M."/>
            <person name="Abril F.N."/>
            <person name="Ball L.A."/>
            <person name="Barrett C.J."/>
            <person name="Blake R.A."/>
            <person name="Boller A.J."/>
            <person name="Chain P.S.G."/>
            <person name="Clark J.A."/>
            <person name="Davis C.R."/>
            <person name="Detter C."/>
            <person name="Do K.F."/>
            <person name="Dobrinski K.P."/>
            <person name="Faza B.I."/>
            <person name="Fitzpatrick K.A."/>
            <person name="Freyermuth S.K."/>
            <person name="Harmer T.L."/>
            <person name="Hauser L.J."/>
            <person name="Huegler M."/>
            <person name="Kerfeld C.A."/>
            <person name="Klotz M.G."/>
            <person name="Kong W.W."/>
            <person name="Land M."/>
            <person name="Lapidus A."/>
            <person name="Larimer F.W."/>
            <person name="Longo D.L."/>
            <person name="Lucas S."/>
            <person name="Malfatti S.A."/>
            <person name="Massey S.E."/>
            <person name="Martin D.D."/>
            <person name="McCuddin Z."/>
            <person name="Meyer F."/>
            <person name="Moore J.L."/>
            <person name="Ocampo L.H. Jr."/>
            <person name="Paul J.H."/>
            <person name="Paulsen I.T."/>
            <person name="Reep D.K."/>
            <person name="Ren Q."/>
            <person name="Ross R.L."/>
            <person name="Sato P.Y."/>
            <person name="Thomas P."/>
            <person name="Tinkham L.E."/>
            <person name="Zeruth G.T."/>
        </authorList>
    </citation>
    <scope>NUCLEOTIDE SEQUENCE [LARGE SCALE GENOMIC DNA]</scope>
    <source>
        <strain>DSM 25203 / XCL-2</strain>
    </source>
</reference>
<protein>
    <recommendedName>
        <fullName evidence="1">Pyridoxine 5'-phosphate synthase</fullName>
        <shortName evidence="1">PNP synthase</shortName>
        <ecNumber evidence="1">2.6.99.2</ecNumber>
    </recommendedName>
</protein>
<gene>
    <name evidence="1" type="primary">pdxJ</name>
    <name type="ordered locus">Tcr_0737</name>
</gene>
<evidence type="ECO:0000255" key="1">
    <source>
        <dbReference type="HAMAP-Rule" id="MF_00279"/>
    </source>
</evidence>